<sequence length="487" mass="53853">MLLRGSRLGDISGEVLDFISSRDVDLWIAEADVLVDMAHLLMLYERGLIPREDCARILTALKELLAEGFGVLGEGEDIHEAIEAYVIERVGPAGGRMHTARSRNDEVATCIRIALREQMLGLMDELIQMIDALVRIADETRERIIPGYTHLQHAQPTTLAHHLLAHADALIRDLERFESTYERVNLSPLGAAAFASTGFDIDRYMTCELLGFSGLVENSMDAVSSRDFALEVLSDTSILMINLSRIAEEIILWSTSEFGYVEVNDLFASTSSIMPQKKNPDTAELVRAKSGTAIGSLVGALSICKALPMSYNRDLQELTPHIWRGIGAARSSLRVMRGCVSTLRFDFERLERSSTEGFTTATELADSMVRITGIPFRTAHQIVGRLARLPGKPSLEDLDRAAMVVADLRLSQMGFTAEDLERALDPRTNISMRSKPGGPAPEEVSRMLDARKKYLESASSRLAEKRSKVDSAIRRLMEGVDRTVTAT</sequence>
<reference key="1">
    <citation type="submission" date="2006-10" db="EMBL/GenBank/DDBJ databases">
        <title>Complete sequence of Methanosaeta thermophila PT.</title>
        <authorList>
            <consortium name="US DOE Joint Genome Institute"/>
            <person name="Copeland A."/>
            <person name="Lucas S."/>
            <person name="Lapidus A."/>
            <person name="Barry K."/>
            <person name="Detter J.C."/>
            <person name="Glavina del Rio T."/>
            <person name="Hammon N."/>
            <person name="Israni S."/>
            <person name="Pitluck S."/>
            <person name="Chain P."/>
            <person name="Malfatti S."/>
            <person name="Shin M."/>
            <person name="Vergez L."/>
            <person name="Schmutz J."/>
            <person name="Larimer F."/>
            <person name="Land M."/>
            <person name="Hauser L."/>
            <person name="Kyrpides N."/>
            <person name="Kim E."/>
            <person name="Smith K.S."/>
            <person name="Ingram-Smith C."/>
            <person name="Richardson P."/>
        </authorList>
    </citation>
    <scope>NUCLEOTIDE SEQUENCE [LARGE SCALE GENOMIC DNA]</scope>
    <source>
        <strain>DSM 6194 / JCM 14653 / NBRC 101360 / PT</strain>
    </source>
</reference>
<feature type="chain" id="PRO_0000321461" description="Argininosuccinate lyase">
    <location>
        <begin position="1"/>
        <end position="487"/>
    </location>
</feature>
<accession>A0B6F9</accession>
<keyword id="KW-0028">Amino-acid biosynthesis</keyword>
<keyword id="KW-0055">Arginine biosynthesis</keyword>
<keyword id="KW-0963">Cytoplasm</keyword>
<keyword id="KW-0456">Lyase</keyword>
<keyword id="KW-1185">Reference proteome</keyword>
<proteinExistence type="inferred from homology"/>
<dbReference type="EC" id="4.3.2.1" evidence="1"/>
<dbReference type="EMBL" id="CP000477">
    <property type="protein sequence ID" value="ABK14283.1"/>
    <property type="molecule type" value="Genomic_DNA"/>
</dbReference>
<dbReference type="RefSeq" id="WP_011695681.1">
    <property type="nucleotide sequence ID" value="NC_008553.1"/>
</dbReference>
<dbReference type="SMR" id="A0B6F9"/>
<dbReference type="STRING" id="349307.Mthe_0492"/>
<dbReference type="GeneID" id="4463239"/>
<dbReference type="KEGG" id="mtp:Mthe_0492"/>
<dbReference type="HOGENOM" id="CLU_027272_2_3_2"/>
<dbReference type="OrthoDB" id="27337at2157"/>
<dbReference type="UniPathway" id="UPA00068">
    <property type="reaction ID" value="UER00114"/>
</dbReference>
<dbReference type="Proteomes" id="UP000000674">
    <property type="component" value="Chromosome"/>
</dbReference>
<dbReference type="GO" id="GO:0005829">
    <property type="term" value="C:cytosol"/>
    <property type="evidence" value="ECO:0007669"/>
    <property type="project" value="TreeGrafter"/>
</dbReference>
<dbReference type="GO" id="GO:0004056">
    <property type="term" value="F:argininosuccinate lyase activity"/>
    <property type="evidence" value="ECO:0007669"/>
    <property type="project" value="UniProtKB-UniRule"/>
</dbReference>
<dbReference type="GO" id="GO:0042450">
    <property type="term" value="P:arginine biosynthetic process via ornithine"/>
    <property type="evidence" value="ECO:0007669"/>
    <property type="project" value="InterPro"/>
</dbReference>
<dbReference type="GO" id="GO:0006526">
    <property type="term" value="P:L-arginine biosynthetic process"/>
    <property type="evidence" value="ECO:0007669"/>
    <property type="project" value="UniProtKB-UniRule"/>
</dbReference>
<dbReference type="CDD" id="cd01359">
    <property type="entry name" value="Argininosuccinate_lyase"/>
    <property type="match status" value="1"/>
</dbReference>
<dbReference type="FunFam" id="1.20.200.10:FF:000015">
    <property type="entry name" value="argininosuccinate lyase isoform X2"/>
    <property type="match status" value="1"/>
</dbReference>
<dbReference type="Gene3D" id="1.10.40.30">
    <property type="entry name" value="Fumarase/aspartase (C-terminal domain)"/>
    <property type="match status" value="1"/>
</dbReference>
<dbReference type="Gene3D" id="1.20.200.10">
    <property type="entry name" value="Fumarase/aspartase (Central domain)"/>
    <property type="match status" value="1"/>
</dbReference>
<dbReference type="Gene3D" id="1.10.275.10">
    <property type="entry name" value="Fumarase/aspartase (N-terminal domain)"/>
    <property type="match status" value="1"/>
</dbReference>
<dbReference type="HAMAP" id="MF_00006">
    <property type="entry name" value="Arg_succ_lyase"/>
    <property type="match status" value="1"/>
</dbReference>
<dbReference type="InterPro" id="IPR029419">
    <property type="entry name" value="Arg_succ_lyase_C"/>
</dbReference>
<dbReference type="InterPro" id="IPR009049">
    <property type="entry name" value="Argininosuccinate_lyase"/>
</dbReference>
<dbReference type="InterPro" id="IPR024083">
    <property type="entry name" value="Fumarase/histidase_N"/>
</dbReference>
<dbReference type="InterPro" id="IPR000362">
    <property type="entry name" value="Fumarate_lyase_fam"/>
</dbReference>
<dbReference type="InterPro" id="IPR022761">
    <property type="entry name" value="Fumarate_lyase_N"/>
</dbReference>
<dbReference type="InterPro" id="IPR008948">
    <property type="entry name" value="L-Aspartase-like"/>
</dbReference>
<dbReference type="NCBIfam" id="TIGR00838">
    <property type="entry name" value="argH"/>
    <property type="match status" value="1"/>
</dbReference>
<dbReference type="PANTHER" id="PTHR43814">
    <property type="entry name" value="ARGININOSUCCINATE LYASE"/>
    <property type="match status" value="1"/>
</dbReference>
<dbReference type="PANTHER" id="PTHR43814:SF1">
    <property type="entry name" value="ARGININOSUCCINATE LYASE"/>
    <property type="match status" value="1"/>
</dbReference>
<dbReference type="Pfam" id="PF14698">
    <property type="entry name" value="ASL_C2"/>
    <property type="match status" value="1"/>
</dbReference>
<dbReference type="Pfam" id="PF00206">
    <property type="entry name" value="Lyase_1"/>
    <property type="match status" value="1"/>
</dbReference>
<dbReference type="PRINTS" id="PR00145">
    <property type="entry name" value="ARGSUCLYASE"/>
</dbReference>
<dbReference type="PRINTS" id="PR00149">
    <property type="entry name" value="FUMRATELYASE"/>
</dbReference>
<dbReference type="SUPFAM" id="SSF48557">
    <property type="entry name" value="L-aspartase-like"/>
    <property type="match status" value="1"/>
</dbReference>
<gene>
    <name evidence="1" type="primary">argH</name>
    <name type="ordered locus">Mthe_0492</name>
</gene>
<name>ARLY_METTP</name>
<comment type="catalytic activity">
    <reaction evidence="1">
        <text>2-(N(omega)-L-arginino)succinate = fumarate + L-arginine</text>
        <dbReference type="Rhea" id="RHEA:24020"/>
        <dbReference type="ChEBI" id="CHEBI:29806"/>
        <dbReference type="ChEBI" id="CHEBI:32682"/>
        <dbReference type="ChEBI" id="CHEBI:57472"/>
        <dbReference type="EC" id="4.3.2.1"/>
    </reaction>
</comment>
<comment type="pathway">
    <text evidence="1">Amino-acid biosynthesis; L-arginine biosynthesis; L-arginine from L-ornithine and carbamoyl phosphate: step 3/3.</text>
</comment>
<comment type="subcellular location">
    <subcellularLocation>
        <location evidence="1">Cytoplasm</location>
    </subcellularLocation>
</comment>
<comment type="similarity">
    <text evidence="1">Belongs to the lyase 1 family. Argininosuccinate lyase subfamily.</text>
</comment>
<protein>
    <recommendedName>
        <fullName evidence="1">Argininosuccinate lyase</fullName>
        <shortName evidence="1">ASAL</shortName>
        <ecNumber evidence="1">4.3.2.1</ecNumber>
    </recommendedName>
    <alternativeName>
        <fullName evidence="1">Arginosuccinase</fullName>
    </alternativeName>
</protein>
<organism>
    <name type="scientific">Methanothrix thermoacetophila (strain DSM 6194 / JCM 14653 / NBRC 101360 / PT)</name>
    <name type="common">Methanosaeta thermophila</name>
    <dbReference type="NCBI Taxonomy" id="349307"/>
    <lineage>
        <taxon>Archaea</taxon>
        <taxon>Methanobacteriati</taxon>
        <taxon>Methanobacteriota</taxon>
        <taxon>Stenosarchaea group</taxon>
        <taxon>Methanomicrobia</taxon>
        <taxon>Methanotrichales</taxon>
        <taxon>Methanotrichaceae</taxon>
        <taxon>Methanothrix</taxon>
    </lineage>
</organism>
<evidence type="ECO:0000255" key="1">
    <source>
        <dbReference type="HAMAP-Rule" id="MF_00006"/>
    </source>
</evidence>